<accession>B4U9N6</accession>
<dbReference type="EC" id="4.6.1.12" evidence="1"/>
<dbReference type="EMBL" id="CP001130">
    <property type="protein sequence ID" value="ACG57847.1"/>
    <property type="molecule type" value="Genomic_DNA"/>
</dbReference>
<dbReference type="RefSeq" id="WP_012514203.1">
    <property type="nucleotide sequence ID" value="NC_011126.1"/>
</dbReference>
<dbReference type="SMR" id="B4U9N6"/>
<dbReference type="STRING" id="380749.HY04AAS1_1161"/>
<dbReference type="KEGG" id="hya:HY04AAS1_1161"/>
<dbReference type="eggNOG" id="COG0245">
    <property type="taxonomic scope" value="Bacteria"/>
</dbReference>
<dbReference type="HOGENOM" id="CLU_084630_2_1_0"/>
<dbReference type="OrthoDB" id="9806837at2"/>
<dbReference type="UniPathway" id="UPA00056">
    <property type="reaction ID" value="UER00095"/>
</dbReference>
<dbReference type="GO" id="GO:0008685">
    <property type="term" value="F:2-C-methyl-D-erythritol 2,4-cyclodiphosphate synthase activity"/>
    <property type="evidence" value="ECO:0007669"/>
    <property type="project" value="UniProtKB-UniRule"/>
</dbReference>
<dbReference type="GO" id="GO:0046872">
    <property type="term" value="F:metal ion binding"/>
    <property type="evidence" value="ECO:0007669"/>
    <property type="project" value="UniProtKB-KW"/>
</dbReference>
<dbReference type="GO" id="GO:0019288">
    <property type="term" value="P:isopentenyl diphosphate biosynthetic process, methylerythritol 4-phosphate pathway"/>
    <property type="evidence" value="ECO:0007669"/>
    <property type="project" value="UniProtKB-UniRule"/>
</dbReference>
<dbReference type="GO" id="GO:0016114">
    <property type="term" value="P:terpenoid biosynthetic process"/>
    <property type="evidence" value="ECO:0007669"/>
    <property type="project" value="InterPro"/>
</dbReference>
<dbReference type="CDD" id="cd00554">
    <property type="entry name" value="MECDP_synthase"/>
    <property type="match status" value="1"/>
</dbReference>
<dbReference type="Gene3D" id="3.30.1330.50">
    <property type="entry name" value="2-C-methyl-D-erythritol 2,4-cyclodiphosphate synthase"/>
    <property type="match status" value="1"/>
</dbReference>
<dbReference type="HAMAP" id="MF_00107">
    <property type="entry name" value="IspF"/>
    <property type="match status" value="1"/>
</dbReference>
<dbReference type="InterPro" id="IPR003526">
    <property type="entry name" value="MECDP_synthase"/>
</dbReference>
<dbReference type="InterPro" id="IPR020555">
    <property type="entry name" value="MECDP_synthase_CS"/>
</dbReference>
<dbReference type="InterPro" id="IPR036571">
    <property type="entry name" value="MECDP_synthase_sf"/>
</dbReference>
<dbReference type="NCBIfam" id="TIGR00151">
    <property type="entry name" value="ispF"/>
    <property type="match status" value="1"/>
</dbReference>
<dbReference type="PANTHER" id="PTHR43181">
    <property type="entry name" value="2-C-METHYL-D-ERYTHRITOL 2,4-CYCLODIPHOSPHATE SYNTHASE, CHLOROPLASTIC"/>
    <property type="match status" value="1"/>
</dbReference>
<dbReference type="PANTHER" id="PTHR43181:SF1">
    <property type="entry name" value="2-C-METHYL-D-ERYTHRITOL 2,4-CYCLODIPHOSPHATE SYNTHASE, CHLOROPLASTIC"/>
    <property type="match status" value="1"/>
</dbReference>
<dbReference type="Pfam" id="PF02542">
    <property type="entry name" value="YgbB"/>
    <property type="match status" value="1"/>
</dbReference>
<dbReference type="SUPFAM" id="SSF69765">
    <property type="entry name" value="IpsF-like"/>
    <property type="match status" value="1"/>
</dbReference>
<dbReference type="PROSITE" id="PS01350">
    <property type="entry name" value="ISPF"/>
    <property type="match status" value="1"/>
</dbReference>
<protein>
    <recommendedName>
        <fullName evidence="1">2-C-methyl-D-erythritol 2,4-cyclodiphosphate synthase</fullName>
        <shortName evidence="1">MECDP-synthase</shortName>
        <shortName evidence="1">MECPP-synthase</shortName>
        <shortName evidence="1">MECPS</shortName>
        <ecNumber evidence="1">4.6.1.12</ecNumber>
    </recommendedName>
</protein>
<evidence type="ECO:0000255" key="1">
    <source>
        <dbReference type="HAMAP-Rule" id="MF_00107"/>
    </source>
</evidence>
<proteinExistence type="inferred from homology"/>
<name>ISPF_HYDS0</name>
<feature type="chain" id="PRO_1000117431" description="2-C-methyl-D-erythritol 2,4-cyclodiphosphate synthase">
    <location>
        <begin position="1"/>
        <end position="156"/>
    </location>
</feature>
<feature type="binding site" evidence="1">
    <location>
        <begin position="9"/>
        <end position="11"/>
    </location>
    <ligand>
        <name>4-CDP-2-C-methyl-D-erythritol 2-phosphate</name>
        <dbReference type="ChEBI" id="CHEBI:57919"/>
    </ligand>
</feature>
<feature type="binding site" evidence="1">
    <location>
        <position position="9"/>
    </location>
    <ligand>
        <name>a divalent metal cation</name>
        <dbReference type="ChEBI" id="CHEBI:60240"/>
    </ligand>
</feature>
<feature type="binding site" evidence="1">
    <location>
        <position position="11"/>
    </location>
    <ligand>
        <name>a divalent metal cation</name>
        <dbReference type="ChEBI" id="CHEBI:60240"/>
    </ligand>
</feature>
<feature type="binding site" evidence="1">
    <location>
        <begin position="35"/>
        <end position="36"/>
    </location>
    <ligand>
        <name>4-CDP-2-C-methyl-D-erythritol 2-phosphate</name>
        <dbReference type="ChEBI" id="CHEBI:57919"/>
    </ligand>
</feature>
<feature type="binding site" evidence="1">
    <location>
        <position position="43"/>
    </location>
    <ligand>
        <name>a divalent metal cation</name>
        <dbReference type="ChEBI" id="CHEBI:60240"/>
    </ligand>
</feature>
<feature type="binding site" evidence="1">
    <location>
        <begin position="57"/>
        <end position="59"/>
    </location>
    <ligand>
        <name>4-CDP-2-C-methyl-D-erythritol 2-phosphate</name>
        <dbReference type="ChEBI" id="CHEBI:57919"/>
    </ligand>
</feature>
<feature type="site" description="Transition state stabilizer" evidence="1">
    <location>
        <position position="35"/>
    </location>
</feature>
<feature type="site" description="Transition state stabilizer" evidence="1">
    <location>
        <position position="134"/>
    </location>
</feature>
<organism>
    <name type="scientific">Hydrogenobaculum sp. (strain Y04AAS1)</name>
    <dbReference type="NCBI Taxonomy" id="380749"/>
    <lineage>
        <taxon>Bacteria</taxon>
        <taxon>Pseudomonadati</taxon>
        <taxon>Aquificota</taxon>
        <taxon>Aquificia</taxon>
        <taxon>Aquificales</taxon>
        <taxon>Aquificaceae</taxon>
        <taxon>Hydrogenobaculum</taxon>
    </lineage>
</organism>
<reference key="1">
    <citation type="journal article" date="2009" name="J. Bacteriol.">
        <title>Complete and draft genome sequences of six members of the Aquificales.</title>
        <authorList>
            <person name="Reysenbach A.-L."/>
            <person name="Hamamura N."/>
            <person name="Podar M."/>
            <person name="Griffiths E."/>
            <person name="Ferreira S."/>
            <person name="Hochstein R."/>
            <person name="Heidelberg J."/>
            <person name="Johnson J."/>
            <person name="Mead D."/>
            <person name="Pohorille A."/>
            <person name="Sarmiento M."/>
            <person name="Schweighofer K."/>
            <person name="Seshadri R."/>
            <person name="Voytek M.A."/>
        </authorList>
    </citation>
    <scope>NUCLEOTIDE SEQUENCE [LARGE SCALE GENOMIC DNA]</scope>
    <source>
        <strain>Y04AAS1</strain>
    </source>
</reference>
<comment type="function">
    <text evidence="1">Involved in the biosynthesis of isopentenyl diphosphate (IPP) and dimethylallyl diphosphate (DMAPP), two major building blocks of isoprenoid compounds. Catalyzes the conversion of 4-diphosphocytidyl-2-C-methyl-D-erythritol 2-phosphate (CDP-ME2P) to 2-C-methyl-D-erythritol 2,4-cyclodiphosphate (ME-CPP) with a corresponding release of cytidine 5-monophosphate (CMP).</text>
</comment>
<comment type="catalytic activity">
    <reaction evidence="1">
        <text>4-CDP-2-C-methyl-D-erythritol 2-phosphate = 2-C-methyl-D-erythritol 2,4-cyclic diphosphate + CMP</text>
        <dbReference type="Rhea" id="RHEA:23864"/>
        <dbReference type="ChEBI" id="CHEBI:57919"/>
        <dbReference type="ChEBI" id="CHEBI:58483"/>
        <dbReference type="ChEBI" id="CHEBI:60377"/>
        <dbReference type="EC" id="4.6.1.12"/>
    </reaction>
</comment>
<comment type="cofactor">
    <cofactor evidence="1">
        <name>a divalent metal cation</name>
        <dbReference type="ChEBI" id="CHEBI:60240"/>
    </cofactor>
    <text evidence="1">Binds 1 divalent metal cation per subunit.</text>
</comment>
<comment type="pathway">
    <text evidence="1">Isoprenoid biosynthesis; isopentenyl diphosphate biosynthesis via DXP pathway; isopentenyl diphosphate from 1-deoxy-D-xylulose 5-phosphate: step 4/6.</text>
</comment>
<comment type="subunit">
    <text evidence="1">Homotrimer.</text>
</comment>
<comment type="similarity">
    <text evidence="1">Belongs to the IspF family.</text>
</comment>
<gene>
    <name evidence="1" type="primary">ispF</name>
    <name type="ordered locus">HY04AAS1_1161</name>
</gene>
<sequence length="156" mass="17372">MYRIGIGQDAHYFEKGKKLYLGGEEFDIGYGLKGHSDGDALLHAITDAILGALAKTDIGTLFPDKSKENKNRNSVDFLNKALEIMYDMDYSIVNLDCNIIADKPNISSVRDKIIESLSRLLSIPKDNISIKAKTKEGYNKEDSLEVVCIALLQKMI</sequence>
<keyword id="KW-0414">Isoprene biosynthesis</keyword>
<keyword id="KW-0456">Lyase</keyword>
<keyword id="KW-0479">Metal-binding</keyword>